<proteinExistence type="evidence at protein level"/>
<feature type="chain" id="PRO_0000047005" description="Protein odd-skipped-related 1">
    <location>
        <begin position="1"/>
        <end position="266"/>
    </location>
</feature>
<feature type="zinc finger region" description="C2H2-type 1" evidence="1">
    <location>
        <begin position="175"/>
        <end position="197"/>
    </location>
</feature>
<feature type="zinc finger region" description="C2H2-type 2" evidence="1">
    <location>
        <begin position="203"/>
        <end position="225"/>
    </location>
</feature>
<feature type="zinc finger region" description="C2H2-type 3" evidence="1">
    <location>
        <begin position="231"/>
        <end position="253"/>
    </location>
</feature>
<feature type="modified residue" description="Asymmetric dimethylarginine" evidence="5">
    <location>
        <position position="116"/>
    </location>
</feature>
<protein>
    <recommendedName>
        <fullName>Protein odd-skipped-related 1</fullName>
    </recommendedName>
</protein>
<organism>
    <name type="scientific">Mus musculus</name>
    <name type="common">Mouse</name>
    <dbReference type="NCBI Taxonomy" id="10090"/>
    <lineage>
        <taxon>Eukaryota</taxon>
        <taxon>Metazoa</taxon>
        <taxon>Chordata</taxon>
        <taxon>Craniata</taxon>
        <taxon>Vertebrata</taxon>
        <taxon>Euteleostomi</taxon>
        <taxon>Mammalia</taxon>
        <taxon>Eutheria</taxon>
        <taxon>Euarchontoglires</taxon>
        <taxon>Glires</taxon>
        <taxon>Rodentia</taxon>
        <taxon>Myomorpha</taxon>
        <taxon>Muroidea</taxon>
        <taxon>Muridae</taxon>
        <taxon>Murinae</taxon>
        <taxon>Mus</taxon>
        <taxon>Mus</taxon>
    </lineage>
</organism>
<name>OSR1_MOUSE</name>
<accession>Q9WVG7</accession>
<comment type="function">
    <text evidence="2">Transcription factor that plays a role in the regulation of embryonic heart and urogenital development.</text>
</comment>
<comment type="subcellular location">
    <subcellularLocation>
        <location evidence="4">Nucleus</location>
    </subcellularLocation>
</comment>
<comment type="developmental stage">
    <text evidence="2">During early embryogenesis it is expressed in the intermediate mesoderm and in a dynamic pattern during limb and branchial arch development. Is expressed from the earliest stage of intermediate development. Is expressed in the dorsal atrial wall, including the developing primary atrial septum and the venous valve.</text>
</comment>
<comment type="induction">
    <text evidence="3">Transcriptionally regulated by Ikzf1 and Runx2.</text>
</comment>
<comment type="disruption phenotype">
    <text evidence="2">Mice die prenatally with severe heart defects including defective atrioventricular junction and venous valves. They never initiate metanephric kidney formation. Nephrogenic mesenchyme undergo massive apoptosis, which causes a disruption of nephric duct elongation and failure of metanephric induction.</text>
</comment>
<comment type="similarity">
    <text evidence="4">Belongs to the Odd C2H2-type zinc-finger protein family.</text>
</comment>
<sequence>MGSKTLPAPVPIHPSLQLTNYSFLQAVNGLPTVPSDHLPNLYGFSALHAVHLHQWTLGYPAMHLPRSSFSKVPGAVSSLMDARFQLPAFPWFPHVIHPKPEITAGGSGAALKTKPRFDFANLALAATQEDPTKLGRGEGPGSPAGGLGALLDVTKLSPEKKPTRGRLPSKTKKEFVCKFCGRHFTKSYNLLIHERTHTDERPYTCDICHKAFRRQDHLRDHRYIHSKEKPFKCQECGKGFCQSRTLAVHKTLHSQVKELKTSKIKC</sequence>
<reference key="1">
    <citation type="journal article" date="1999" name="Mech. Dev.">
        <title>Cloning and expression analysis of a mouse gene related to Drosophila odd-skipped.</title>
        <authorList>
            <person name="So P.L."/>
            <person name="Danielian P.S."/>
        </authorList>
    </citation>
    <scope>NUCLEOTIDE SEQUENCE [MRNA]</scope>
</reference>
<reference key="2">
    <citation type="journal article" date="2004" name="Genome Res.">
        <title>The status, quality, and expansion of the NIH full-length cDNA project: the Mammalian Gene Collection (MGC).</title>
        <authorList>
            <consortium name="The MGC Project Team"/>
        </authorList>
    </citation>
    <scope>NUCLEOTIDE SEQUENCE [LARGE SCALE MRNA]</scope>
    <source>
        <strain>FVB/N</strain>
        <tissue>Mammary tumor</tissue>
    </source>
</reference>
<reference key="3">
    <citation type="journal article" date="2005" name="Dev. Biol.">
        <title>Odd-skipped related 1 (Odd 1) is an essential regulator of heart and urogenital development.</title>
        <authorList>
            <person name="Wang Q."/>
            <person name="Lan Y."/>
            <person name="Cho E.S."/>
            <person name="Maltby K.M."/>
            <person name="Jiang R."/>
        </authorList>
    </citation>
    <scope>FUNCTION</scope>
    <scope>DEVELOPMENTAL STAGE</scope>
    <scope>DISRUPTION PHENOTYPE</scope>
</reference>
<reference key="4">
    <citation type="journal article" date="2008" name="Gene">
        <title>Odd-skipped related 1 gene expression is regulated by Runx2 and Ikzf1 transcription factors.</title>
        <authorList>
            <person name="Yamauchi M."/>
            <person name="Kawai S."/>
            <person name="Kato T."/>
            <person name="Ooshima T."/>
            <person name="Amano A."/>
        </authorList>
    </citation>
    <scope>INDUCTION</scope>
</reference>
<reference key="5">
    <citation type="journal article" date="2014" name="Mol. Cell. Proteomics">
        <title>Immunoaffinity enrichment and mass spectrometry analysis of protein methylation.</title>
        <authorList>
            <person name="Guo A."/>
            <person name="Gu H."/>
            <person name="Zhou J."/>
            <person name="Mulhern D."/>
            <person name="Wang Y."/>
            <person name="Lee K.A."/>
            <person name="Yang V."/>
            <person name="Aguiar M."/>
            <person name="Kornhauser J."/>
            <person name="Jia X."/>
            <person name="Ren J."/>
            <person name="Beausoleil S.A."/>
            <person name="Silva J.C."/>
            <person name="Vemulapalli V."/>
            <person name="Bedford M.T."/>
            <person name="Comb M.J."/>
        </authorList>
    </citation>
    <scope>METHYLATION [LARGE SCALE ANALYSIS] AT ARG-116</scope>
    <scope>IDENTIFICATION BY MASS SPECTROMETRY [LARGE SCALE ANALYSIS]</scope>
    <source>
        <tissue>Embryo</tissue>
    </source>
</reference>
<keyword id="KW-0479">Metal-binding</keyword>
<keyword id="KW-0488">Methylation</keyword>
<keyword id="KW-0539">Nucleus</keyword>
<keyword id="KW-1185">Reference proteome</keyword>
<keyword id="KW-0677">Repeat</keyword>
<keyword id="KW-0804">Transcription</keyword>
<keyword id="KW-0805">Transcription regulation</keyword>
<keyword id="KW-0862">Zinc</keyword>
<keyword id="KW-0863">Zinc-finger</keyword>
<dbReference type="EMBL" id="AF117814">
    <property type="protein sequence ID" value="AAD37115.1"/>
    <property type="molecule type" value="mRNA"/>
</dbReference>
<dbReference type="EMBL" id="BC023922">
    <property type="protein sequence ID" value="AAH23922.1"/>
    <property type="molecule type" value="mRNA"/>
</dbReference>
<dbReference type="CCDS" id="CCDS25809.1"/>
<dbReference type="RefSeq" id="NP_035989.1">
    <property type="nucleotide sequence ID" value="NM_011859.3"/>
</dbReference>
<dbReference type="RefSeq" id="XP_036013300.1">
    <property type="nucleotide sequence ID" value="XM_036157407.1"/>
</dbReference>
<dbReference type="SMR" id="Q9WVG7"/>
<dbReference type="BioGRID" id="204828">
    <property type="interactions" value="1"/>
</dbReference>
<dbReference type="FunCoup" id="Q9WVG7">
    <property type="interactions" value="892"/>
</dbReference>
<dbReference type="STRING" id="10090.ENSMUSP00000055486"/>
<dbReference type="iPTMnet" id="Q9WVG7"/>
<dbReference type="PhosphoSitePlus" id="Q9WVG7"/>
<dbReference type="PaxDb" id="10090-ENSMUSP00000055486"/>
<dbReference type="ProteomicsDB" id="293530"/>
<dbReference type="Pumba" id="Q9WVG7"/>
<dbReference type="Antibodypedia" id="12948">
    <property type="antibodies" value="372 antibodies from 30 providers"/>
</dbReference>
<dbReference type="DNASU" id="23967"/>
<dbReference type="Ensembl" id="ENSMUST00000057021.9">
    <property type="protein sequence ID" value="ENSMUSP00000055486.8"/>
    <property type="gene ID" value="ENSMUSG00000048387.9"/>
</dbReference>
<dbReference type="GeneID" id="23967"/>
<dbReference type="KEGG" id="mmu:23967"/>
<dbReference type="UCSC" id="uc007nao.2">
    <property type="organism name" value="mouse"/>
</dbReference>
<dbReference type="AGR" id="MGI:1344424"/>
<dbReference type="CTD" id="130497"/>
<dbReference type="MGI" id="MGI:1344424">
    <property type="gene designation" value="Osr1"/>
</dbReference>
<dbReference type="VEuPathDB" id="HostDB:ENSMUSG00000048387"/>
<dbReference type="eggNOG" id="KOG1721">
    <property type="taxonomic scope" value="Eukaryota"/>
</dbReference>
<dbReference type="GeneTree" id="ENSGT00940000158993"/>
<dbReference type="HOGENOM" id="CLU_051854_0_0_1"/>
<dbReference type="InParanoid" id="Q9WVG7"/>
<dbReference type="OMA" id="CIFCKEE"/>
<dbReference type="OrthoDB" id="9451254at2759"/>
<dbReference type="PhylomeDB" id="Q9WVG7"/>
<dbReference type="TreeFam" id="TF350876"/>
<dbReference type="BioGRID-ORCS" id="23967">
    <property type="hits" value="3 hits in 76 CRISPR screens"/>
</dbReference>
<dbReference type="ChiTaRS" id="Osr1">
    <property type="organism name" value="mouse"/>
</dbReference>
<dbReference type="PRO" id="PR:Q9WVG7"/>
<dbReference type="Proteomes" id="UP000000589">
    <property type="component" value="Chromosome 12"/>
</dbReference>
<dbReference type="RNAct" id="Q9WVG7">
    <property type="molecule type" value="protein"/>
</dbReference>
<dbReference type="Bgee" id="ENSMUSG00000048387">
    <property type="expression patterns" value="Expressed in dorsal pancreas and 220 other cell types or tissues"/>
</dbReference>
<dbReference type="ExpressionAtlas" id="Q9WVG7">
    <property type="expression patterns" value="baseline and differential"/>
</dbReference>
<dbReference type="GO" id="GO:0005654">
    <property type="term" value="C:nucleoplasm"/>
    <property type="evidence" value="ECO:0000304"/>
    <property type="project" value="Reactome"/>
</dbReference>
<dbReference type="GO" id="GO:0005634">
    <property type="term" value="C:nucleus"/>
    <property type="evidence" value="ECO:0000250"/>
    <property type="project" value="UniProtKB"/>
</dbReference>
<dbReference type="GO" id="GO:1990837">
    <property type="term" value="F:sequence-specific double-stranded DNA binding"/>
    <property type="evidence" value="ECO:0007669"/>
    <property type="project" value="Ensembl"/>
</dbReference>
<dbReference type="GO" id="GO:0008270">
    <property type="term" value="F:zinc ion binding"/>
    <property type="evidence" value="ECO:0007669"/>
    <property type="project" value="UniProtKB-KW"/>
</dbReference>
<dbReference type="GO" id="GO:0030154">
    <property type="term" value="P:cell differentiation"/>
    <property type="evidence" value="ECO:0000316"/>
    <property type="project" value="BHF-UCL"/>
</dbReference>
<dbReference type="GO" id="GO:0072111">
    <property type="term" value="P:cell proliferation involved in kidney development"/>
    <property type="evidence" value="ECO:0000315"/>
    <property type="project" value="UniProtKB"/>
</dbReference>
<dbReference type="GO" id="GO:0071300">
    <property type="term" value="P:cellular response to retinoic acid"/>
    <property type="evidence" value="ECO:0000270"/>
    <property type="project" value="UniProtKB"/>
</dbReference>
<dbReference type="GO" id="GO:0002062">
    <property type="term" value="P:chondrocyte differentiation"/>
    <property type="evidence" value="ECO:0000316"/>
    <property type="project" value="BHF-UCL"/>
</dbReference>
<dbReference type="GO" id="GO:0042733">
    <property type="term" value="P:embryonic digit morphogenesis"/>
    <property type="evidence" value="ECO:0000316"/>
    <property type="project" value="BHF-UCL"/>
</dbReference>
<dbReference type="GO" id="GO:0035115">
    <property type="term" value="P:embryonic forelimb morphogenesis"/>
    <property type="evidence" value="ECO:0000316"/>
    <property type="project" value="BHF-UCL"/>
</dbReference>
<dbReference type="GO" id="GO:0035116">
    <property type="term" value="P:embryonic hindlimb morphogenesis"/>
    <property type="evidence" value="ECO:0000316"/>
    <property type="project" value="BHF-UCL"/>
</dbReference>
<dbReference type="GO" id="GO:0072498">
    <property type="term" value="P:embryonic skeletal joint development"/>
    <property type="evidence" value="ECO:0000316"/>
    <property type="project" value="BHF-UCL"/>
</dbReference>
<dbReference type="GO" id="GO:0060272">
    <property type="term" value="P:embryonic skeletal joint morphogenesis"/>
    <property type="evidence" value="ECO:0000316"/>
    <property type="project" value="BHF-UCL"/>
</dbReference>
<dbReference type="GO" id="GO:0036023">
    <property type="term" value="P:embryonic skeletal limb joint morphogenesis"/>
    <property type="evidence" value="ECO:0000316"/>
    <property type="project" value="BHF-UCL"/>
</dbReference>
<dbReference type="GO" id="GO:0008406">
    <property type="term" value="P:gonad development"/>
    <property type="evidence" value="ECO:0000315"/>
    <property type="project" value="MGI"/>
</dbReference>
<dbReference type="GO" id="GO:0007507">
    <property type="term" value="P:heart development"/>
    <property type="evidence" value="ECO:0000315"/>
    <property type="project" value="UniProtKB"/>
</dbReference>
<dbReference type="GO" id="GO:0048389">
    <property type="term" value="P:intermediate mesoderm development"/>
    <property type="evidence" value="ECO:0000315"/>
    <property type="project" value="MGI"/>
</dbReference>
<dbReference type="GO" id="GO:0072143">
    <property type="term" value="P:mesangial cell development"/>
    <property type="evidence" value="ECO:0000315"/>
    <property type="project" value="UniProtKB"/>
</dbReference>
<dbReference type="GO" id="GO:0072180">
    <property type="term" value="P:mesonephric duct morphogenesis"/>
    <property type="evidence" value="ECO:0000315"/>
    <property type="project" value="UniProtKB"/>
</dbReference>
<dbReference type="GO" id="GO:0001823">
    <property type="term" value="P:mesonephros development"/>
    <property type="evidence" value="ECO:0000315"/>
    <property type="project" value="UniProtKB"/>
</dbReference>
<dbReference type="GO" id="GO:0090094">
    <property type="term" value="P:metanephric cap mesenchymal cell proliferation involved in metanephros development"/>
    <property type="evidence" value="ECO:0000315"/>
    <property type="project" value="UniProtKB"/>
</dbReference>
<dbReference type="GO" id="GO:0072207">
    <property type="term" value="P:metanephric epithelium development"/>
    <property type="evidence" value="ECO:0000315"/>
    <property type="project" value="UniProtKB"/>
</dbReference>
<dbReference type="GO" id="GO:0072239">
    <property type="term" value="P:metanephric glomerulus vasculature development"/>
    <property type="evidence" value="ECO:0000315"/>
    <property type="project" value="UniProtKB"/>
</dbReference>
<dbReference type="GO" id="GO:0072259">
    <property type="term" value="P:metanephric interstitial fibroblast development"/>
    <property type="evidence" value="ECO:0000315"/>
    <property type="project" value="UniProtKB"/>
</dbReference>
<dbReference type="GO" id="GO:0072162">
    <property type="term" value="P:metanephric mesenchymal cell differentiation"/>
    <property type="evidence" value="ECO:0000315"/>
    <property type="project" value="UniProtKB"/>
</dbReference>
<dbReference type="GO" id="GO:0072075">
    <property type="term" value="P:metanephric mesenchyme development"/>
    <property type="evidence" value="ECO:0000314"/>
    <property type="project" value="UniProtKB"/>
</dbReference>
<dbReference type="GO" id="GO:0072133">
    <property type="term" value="P:metanephric mesenchyme morphogenesis"/>
    <property type="evidence" value="ECO:0000315"/>
    <property type="project" value="UniProtKB"/>
</dbReference>
<dbReference type="GO" id="GO:0072234">
    <property type="term" value="P:metanephric nephron tubule development"/>
    <property type="evidence" value="ECO:0000315"/>
    <property type="project" value="UniProtKB"/>
</dbReference>
<dbReference type="GO" id="GO:0072208">
    <property type="term" value="P:metanephric smooth muscle tissue development"/>
    <property type="evidence" value="ECO:0000315"/>
    <property type="project" value="UniProtKB"/>
</dbReference>
<dbReference type="GO" id="GO:0001656">
    <property type="term" value="P:metanephros development"/>
    <property type="evidence" value="ECO:0000315"/>
    <property type="project" value="MGI"/>
</dbReference>
<dbReference type="GO" id="GO:0042474">
    <property type="term" value="P:middle ear morphogenesis"/>
    <property type="evidence" value="ECO:0000316"/>
    <property type="project" value="UniProtKB"/>
</dbReference>
<dbReference type="GO" id="GO:0043066">
    <property type="term" value="P:negative regulation of apoptotic process"/>
    <property type="evidence" value="ECO:0000315"/>
    <property type="project" value="UniProtKB"/>
</dbReference>
<dbReference type="GO" id="GO:0030857">
    <property type="term" value="P:negative regulation of epithelial cell differentiation"/>
    <property type="evidence" value="ECO:0000315"/>
    <property type="project" value="UniProtKB"/>
</dbReference>
<dbReference type="GO" id="GO:0072183">
    <property type="term" value="P:negative regulation of nephron tubule epithelial cell differentiation"/>
    <property type="evidence" value="ECO:0000315"/>
    <property type="project" value="UniProtKB"/>
</dbReference>
<dbReference type="GO" id="GO:0000122">
    <property type="term" value="P:negative regulation of transcription by RNA polymerase II"/>
    <property type="evidence" value="ECO:0000316"/>
    <property type="project" value="BHF-UCL"/>
</dbReference>
<dbReference type="GO" id="GO:0042476">
    <property type="term" value="P:odontogenesis"/>
    <property type="evidence" value="ECO:0000316"/>
    <property type="project" value="UniProtKB"/>
</dbReference>
<dbReference type="GO" id="GO:0072268">
    <property type="term" value="P:pattern specification involved in metanephros development"/>
    <property type="evidence" value="ECO:0000315"/>
    <property type="project" value="UniProtKB"/>
</dbReference>
<dbReference type="GO" id="GO:0030501">
    <property type="term" value="P:positive regulation of bone mineralization"/>
    <property type="evidence" value="ECO:0000316"/>
    <property type="project" value="BHF-UCL"/>
</dbReference>
<dbReference type="GO" id="GO:0050679">
    <property type="term" value="P:positive regulation of epithelial cell proliferation"/>
    <property type="evidence" value="ECO:0000316"/>
    <property type="project" value="UniProtKB"/>
</dbReference>
<dbReference type="GO" id="GO:2000543">
    <property type="term" value="P:positive regulation of gastrulation"/>
    <property type="evidence" value="ECO:0000250"/>
    <property type="project" value="UniProtKB"/>
</dbReference>
<dbReference type="GO" id="GO:0010628">
    <property type="term" value="P:positive regulation of gene expression"/>
    <property type="evidence" value="ECO:0000315"/>
    <property type="project" value="UniProtKB"/>
</dbReference>
<dbReference type="GO" id="GO:0045944">
    <property type="term" value="P:positive regulation of transcription by RNA polymerase II"/>
    <property type="evidence" value="ECO:0000314"/>
    <property type="project" value="NTNU_SB"/>
</dbReference>
<dbReference type="GO" id="GO:0072166">
    <property type="term" value="P:posterior mesonephric tubule development"/>
    <property type="evidence" value="ECO:0000315"/>
    <property type="project" value="UniProtKB"/>
</dbReference>
<dbReference type="GO" id="GO:0048793">
    <property type="term" value="P:pronephros development"/>
    <property type="evidence" value="ECO:0000250"/>
    <property type="project" value="UniProtKB"/>
</dbReference>
<dbReference type="GO" id="GO:0072184">
    <property type="term" value="P:renal vesicle progenitor cell differentiation"/>
    <property type="evidence" value="ECO:0000315"/>
    <property type="project" value="UniProtKB"/>
</dbReference>
<dbReference type="GO" id="GO:0060021">
    <property type="term" value="P:roof of mouth development"/>
    <property type="evidence" value="ECO:0000316"/>
    <property type="project" value="UniProtKB"/>
</dbReference>
<dbReference type="GO" id="GO:0035725">
    <property type="term" value="P:sodium ion transmembrane transport"/>
    <property type="evidence" value="ECO:0000315"/>
    <property type="project" value="MGI"/>
</dbReference>
<dbReference type="GO" id="GO:0072168">
    <property type="term" value="P:specification of anterior mesonephric tubule identity"/>
    <property type="evidence" value="ECO:0000315"/>
    <property type="project" value="UniProtKB"/>
</dbReference>
<dbReference type="GO" id="GO:0072169">
    <property type="term" value="P:specification of posterior mesonephric tubule identity"/>
    <property type="evidence" value="ECO:0000315"/>
    <property type="project" value="UniProtKB"/>
</dbReference>
<dbReference type="GO" id="GO:0048863">
    <property type="term" value="P:stem cell differentiation"/>
    <property type="evidence" value="ECO:0000314"/>
    <property type="project" value="UniProtKB"/>
</dbReference>
<dbReference type="GO" id="GO:0072190">
    <property type="term" value="P:ureter urothelium development"/>
    <property type="evidence" value="ECO:0000315"/>
    <property type="project" value="UniProtKB"/>
</dbReference>
<dbReference type="GO" id="GO:0001657">
    <property type="term" value="P:ureteric bud development"/>
    <property type="evidence" value="ECO:0000315"/>
    <property type="project" value="UniProtKB"/>
</dbReference>
<dbReference type="GO" id="GO:0001655">
    <property type="term" value="P:urogenital system development"/>
    <property type="evidence" value="ECO:0000315"/>
    <property type="project" value="UniProtKB"/>
</dbReference>
<dbReference type="FunFam" id="3.30.160.60:FF:000254">
    <property type="entry name" value="Odd-skipped related transciption factor 1"/>
    <property type="match status" value="1"/>
</dbReference>
<dbReference type="FunFam" id="3.30.160.60:FF:000090">
    <property type="entry name" value="Odd-skipped-related transciption factor 2"/>
    <property type="match status" value="1"/>
</dbReference>
<dbReference type="FunFam" id="3.30.160.60:FF:000311">
    <property type="entry name" value="protein odd-skipped-related 2 isoform X1"/>
    <property type="match status" value="1"/>
</dbReference>
<dbReference type="Gene3D" id="3.30.160.60">
    <property type="entry name" value="Classic Zinc Finger"/>
    <property type="match status" value="3"/>
</dbReference>
<dbReference type="InterPro" id="IPR050717">
    <property type="entry name" value="C2H2-ZF_Transcription_Reg"/>
</dbReference>
<dbReference type="InterPro" id="IPR036236">
    <property type="entry name" value="Znf_C2H2_sf"/>
</dbReference>
<dbReference type="InterPro" id="IPR013087">
    <property type="entry name" value="Znf_C2H2_type"/>
</dbReference>
<dbReference type="PANTHER" id="PTHR14196">
    <property type="entry name" value="ODD-SKIPPED - RELATED"/>
    <property type="match status" value="1"/>
</dbReference>
<dbReference type="PANTHER" id="PTHR14196:SF5">
    <property type="entry name" value="PROTEIN ODD-SKIPPED-RELATED 1"/>
    <property type="match status" value="1"/>
</dbReference>
<dbReference type="Pfam" id="PF00096">
    <property type="entry name" value="zf-C2H2"/>
    <property type="match status" value="3"/>
</dbReference>
<dbReference type="SMART" id="SM00355">
    <property type="entry name" value="ZnF_C2H2"/>
    <property type="match status" value="3"/>
</dbReference>
<dbReference type="SUPFAM" id="SSF57667">
    <property type="entry name" value="beta-beta-alpha zinc fingers"/>
    <property type="match status" value="2"/>
</dbReference>
<dbReference type="PROSITE" id="PS00028">
    <property type="entry name" value="ZINC_FINGER_C2H2_1"/>
    <property type="match status" value="3"/>
</dbReference>
<dbReference type="PROSITE" id="PS50157">
    <property type="entry name" value="ZINC_FINGER_C2H2_2"/>
    <property type="match status" value="3"/>
</dbReference>
<gene>
    <name type="primary">Osr1</name>
    <name type="synonym">Odd1</name>
</gene>
<evidence type="ECO:0000255" key="1">
    <source>
        <dbReference type="PROSITE-ProRule" id="PRU00042"/>
    </source>
</evidence>
<evidence type="ECO:0000269" key="2">
    <source>
    </source>
</evidence>
<evidence type="ECO:0000269" key="3">
    <source>
    </source>
</evidence>
<evidence type="ECO:0000305" key="4"/>
<evidence type="ECO:0007744" key="5">
    <source>
    </source>
</evidence>